<reference key="1">
    <citation type="journal article" date="2012" name="PLoS ONE">
        <title>Characterization of profilin polymorphism in pollen with a focus on multifunctionality.</title>
        <authorList>
            <person name="Jimenez-Lopez J.C."/>
            <person name="Morales S."/>
            <person name="Castro A.J."/>
            <person name="Volkmann D."/>
            <person name="Rodriguez-Garcia M.I."/>
            <person name="Alche Jde D."/>
        </authorList>
    </citation>
    <scope>NUCLEOTIDE SEQUENCE [MRNA]</scope>
    <scope>POLYMORPHISM</scope>
    <source>
        <strain>cv. Loaime</strain>
    </source>
</reference>
<reference key="2">
    <citation type="journal article" date="2013" name="PLoS ONE">
        <title>Analysis of the effects of polymorphism on pollen profilin structural functionality and the generation of conformational, T- and B-cell epitopes.</title>
        <authorList>
            <person name="Jimenez-Lopez J.C."/>
            <person name="Rodriguez-Garcia M.I."/>
            <person name="Alche J.D."/>
        </authorList>
    </citation>
    <scope>3D-STRUCTURE MODELING</scope>
    <scope>DISULFIDE BOND</scope>
</reference>
<feature type="initiator methionine" description="Removed" evidence="1">
    <location>
        <position position="1"/>
    </location>
</feature>
<feature type="chain" id="PRO_0000424989" description="Profilin-2">
    <location>
        <begin position="2"/>
        <end position="134"/>
    </location>
</feature>
<feature type="short sequence motif" description="Involved in PIP2 interaction">
    <location>
        <begin position="84"/>
        <end position="100"/>
    </location>
</feature>
<feature type="modified residue" description="Phosphothreonine" evidence="1">
    <location>
        <position position="114"/>
    </location>
</feature>
<feature type="disulfide bond" evidence="3">
    <location>
        <begin position="13"/>
        <end position="118"/>
    </location>
</feature>
<proteinExistence type="evidence at protein level"/>
<organism>
    <name type="scientific">Olea europaea</name>
    <name type="common">Common olive</name>
    <dbReference type="NCBI Taxonomy" id="4146"/>
    <lineage>
        <taxon>Eukaryota</taxon>
        <taxon>Viridiplantae</taxon>
        <taxon>Streptophyta</taxon>
        <taxon>Embryophyta</taxon>
        <taxon>Tracheophyta</taxon>
        <taxon>Spermatophyta</taxon>
        <taxon>Magnoliopsida</taxon>
        <taxon>eudicotyledons</taxon>
        <taxon>Gunneridae</taxon>
        <taxon>Pentapetalae</taxon>
        <taxon>asterids</taxon>
        <taxon>lamiids</taxon>
        <taxon>Lamiales</taxon>
        <taxon>Oleaceae</taxon>
        <taxon>Oleeae</taxon>
        <taxon>Olea</taxon>
    </lineage>
</organism>
<sequence>MSWQAYVDDHLMCDIEGHEDHRLTAAAIVGHDGSVWAQSATFPQFKPEEMNGIMTDFNEPGHLAPTGLHLGGTKYMVIQGEAGAVIRGKKGSGGITIKKTGQALVFGIYEEPVTPGQCNMVVERLGDYLLEQGL</sequence>
<dbReference type="EMBL" id="DQ138339">
    <property type="protein sequence ID" value="AAZ30417.1"/>
    <property type="molecule type" value="mRNA"/>
</dbReference>
<dbReference type="EMBL" id="DQ138340">
    <property type="protein sequence ID" value="AAZ30418.1"/>
    <property type="molecule type" value="mRNA"/>
</dbReference>
<dbReference type="EMBL" id="DQ138341">
    <property type="protein sequence ID" value="AAZ30419.1"/>
    <property type="molecule type" value="mRNA"/>
</dbReference>
<dbReference type="SMR" id="P0DKE5"/>
<dbReference type="GO" id="GO:0005938">
    <property type="term" value="C:cell cortex"/>
    <property type="evidence" value="ECO:0007669"/>
    <property type="project" value="TreeGrafter"/>
</dbReference>
<dbReference type="GO" id="GO:0005856">
    <property type="term" value="C:cytoskeleton"/>
    <property type="evidence" value="ECO:0007669"/>
    <property type="project" value="UniProtKB-SubCell"/>
</dbReference>
<dbReference type="GO" id="GO:0003785">
    <property type="term" value="F:actin monomer binding"/>
    <property type="evidence" value="ECO:0007669"/>
    <property type="project" value="TreeGrafter"/>
</dbReference>
<dbReference type="CDD" id="cd00148">
    <property type="entry name" value="PROF"/>
    <property type="match status" value="1"/>
</dbReference>
<dbReference type="FunFam" id="3.30.450.30:FF:000001">
    <property type="entry name" value="Profilin"/>
    <property type="match status" value="1"/>
</dbReference>
<dbReference type="Gene3D" id="3.30.450.30">
    <property type="entry name" value="Dynein light chain 2a, cytoplasmic"/>
    <property type="match status" value="1"/>
</dbReference>
<dbReference type="InterPro" id="IPR048278">
    <property type="entry name" value="PFN"/>
</dbReference>
<dbReference type="InterPro" id="IPR005455">
    <property type="entry name" value="PFN_euk"/>
</dbReference>
<dbReference type="InterPro" id="IPR036140">
    <property type="entry name" value="PFN_sf"/>
</dbReference>
<dbReference type="InterPro" id="IPR027310">
    <property type="entry name" value="Profilin_CS"/>
</dbReference>
<dbReference type="PANTHER" id="PTHR11604">
    <property type="entry name" value="PROFILIN"/>
    <property type="match status" value="1"/>
</dbReference>
<dbReference type="PANTHER" id="PTHR11604:SF25">
    <property type="entry name" value="PROFILIN-5"/>
    <property type="match status" value="1"/>
</dbReference>
<dbReference type="Pfam" id="PF00235">
    <property type="entry name" value="Profilin"/>
    <property type="match status" value="1"/>
</dbReference>
<dbReference type="PRINTS" id="PR00392">
    <property type="entry name" value="PROFILIN"/>
</dbReference>
<dbReference type="PRINTS" id="PR01640">
    <property type="entry name" value="PROFILINPLNT"/>
</dbReference>
<dbReference type="SMART" id="SM00392">
    <property type="entry name" value="PROF"/>
    <property type="match status" value="1"/>
</dbReference>
<dbReference type="SUPFAM" id="SSF55770">
    <property type="entry name" value="Profilin (actin-binding protein)"/>
    <property type="match status" value="1"/>
</dbReference>
<dbReference type="PROSITE" id="PS00414">
    <property type="entry name" value="PROFILIN"/>
    <property type="match status" value="1"/>
</dbReference>
<keyword id="KW-0009">Actin-binding</keyword>
<keyword id="KW-0020">Allergen</keyword>
<keyword id="KW-0963">Cytoplasm</keyword>
<keyword id="KW-0206">Cytoskeleton</keyword>
<keyword id="KW-1015">Disulfide bond</keyword>
<keyword id="KW-0597">Phosphoprotein</keyword>
<accession>P0DKE5</accession>
<accession>A4GD53</accession>
<protein>
    <recommendedName>
        <fullName>Profilin-2</fullName>
    </recommendedName>
    <alternativeName>
        <fullName>Pollen allergen Ole e 2</fullName>
    </alternativeName>
    <allergenName>Ole e 2</allergenName>
</protein>
<evidence type="ECO:0000250" key="1"/>
<evidence type="ECO:0000305" key="2"/>
<evidence type="ECO:0000305" key="3">
    <source>
    </source>
</evidence>
<comment type="function">
    <text evidence="1">Binds to actin and affects the structure of the cytoskeleton. At high concentrations, profilin prevents the polymerization of actin, whereas it enhances it at low concentrations (By similarity).</text>
</comment>
<comment type="subunit">
    <text evidence="1">Occurs in many kinds of cells as a complex with monomeric actin in a 1:1 ratio.</text>
</comment>
<comment type="subcellular location">
    <subcellularLocation>
        <location evidence="1">Cytoplasm</location>
        <location evidence="1">Cytoskeleton</location>
    </subcellularLocation>
</comment>
<comment type="PTM">
    <text evidence="1">Phosphorylated by MAP kinases.</text>
</comment>
<comment type="polymorphism">
    <text>Several isoforms of the allergen exist due to polymorphism.</text>
</comment>
<comment type="allergen">
    <text>Causes an allergic reaction in human.</text>
</comment>
<comment type="miscellaneous">
    <text evidence="3">The variability of the residues taking part of IgE-binding epitopes might be responsible of the difference in cross-reactivity among olive pollen cultivars, and between distantly related pollen species, leading to a variable range of allergy reactions among atopic patients.</text>
</comment>
<comment type="similarity">
    <text evidence="2">Belongs to the profilin family.</text>
</comment>
<name>PROFX_OLEEU</name>